<reference key="1">
    <citation type="journal article" date="2009" name="Infect. Immun.">
        <title>Comparative genomics reveal extensive transposon-mediated genomic plasticity and diversity among potential effector proteins within the genus Coxiella.</title>
        <authorList>
            <person name="Beare P.A."/>
            <person name="Unsworth N."/>
            <person name="Andoh M."/>
            <person name="Voth D.E."/>
            <person name="Omsland A."/>
            <person name="Gilk S.D."/>
            <person name="Williams K.P."/>
            <person name="Sobral B.W."/>
            <person name="Kupko J.J. III"/>
            <person name="Porcella S.F."/>
            <person name="Samuel J.E."/>
            <person name="Heinzen R.A."/>
        </authorList>
    </citation>
    <scope>NUCLEOTIDE SEQUENCE [LARGE SCALE GENOMIC DNA]</scope>
    <source>
        <strain>Dugway 5J108-111</strain>
    </source>
</reference>
<keyword id="KW-0963">Cytoplasm</keyword>
<keyword id="KW-0690">Ribosome biogenesis</keyword>
<feature type="chain" id="PRO_1000073757" description="Ribosome-binding factor A">
    <location>
        <begin position="1"/>
        <end position="119"/>
    </location>
</feature>
<name>RBFA_COXBN</name>
<accession>A9KBM2</accession>
<gene>
    <name evidence="1" type="primary">rbfA</name>
    <name type="ordered locus">CBUD_0564</name>
</gene>
<comment type="function">
    <text evidence="1">One of several proteins that assist in the late maturation steps of the functional core of the 30S ribosomal subunit. Associates with free 30S ribosomal subunits (but not with 30S subunits that are part of 70S ribosomes or polysomes). Required for efficient processing of 16S rRNA. May interact with the 5'-terminal helix region of 16S rRNA.</text>
</comment>
<comment type="subunit">
    <text evidence="1">Monomer. Binds 30S ribosomal subunits, but not 50S ribosomal subunits or 70S ribosomes.</text>
</comment>
<comment type="subcellular location">
    <subcellularLocation>
        <location evidence="1">Cytoplasm</location>
    </subcellularLocation>
</comment>
<comment type="similarity">
    <text evidence="1">Belongs to the RbfA family.</text>
</comment>
<dbReference type="EMBL" id="CP000733">
    <property type="protein sequence ID" value="ABS78348.1"/>
    <property type="molecule type" value="Genomic_DNA"/>
</dbReference>
<dbReference type="RefSeq" id="WP_005769039.1">
    <property type="nucleotide sequence ID" value="NC_009727.1"/>
</dbReference>
<dbReference type="SMR" id="A9KBM2"/>
<dbReference type="KEGG" id="cbd:CBUD_0564"/>
<dbReference type="HOGENOM" id="CLU_089475_5_1_6"/>
<dbReference type="Proteomes" id="UP000008555">
    <property type="component" value="Chromosome"/>
</dbReference>
<dbReference type="GO" id="GO:0005829">
    <property type="term" value="C:cytosol"/>
    <property type="evidence" value="ECO:0007669"/>
    <property type="project" value="TreeGrafter"/>
</dbReference>
<dbReference type="GO" id="GO:0043024">
    <property type="term" value="F:ribosomal small subunit binding"/>
    <property type="evidence" value="ECO:0007669"/>
    <property type="project" value="TreeGrafter"/>
</dbReference>
<dbReference type="GO" id="GO:0030490">
    <property type="term" value="P:maturation of SSU-rRNA"/>
    <property type="evidence" value="ECO:0007669"/>
    <property type="project" value="UniProtKB-UniRule"/>
</dbReference>
<dbReference type="Gene3D" id="3.30.300.20">
    <property type="match status" value="1"/>
</dbReference>
<dbReference type="HAMAP" id="MF_00003">
    <property type="entry name" value="RbfA"/>
    <property type="match status" value="1"/>
</dbReference>
<dbReference type="InterPro" id="IPR015946">
    <property type="entry name" value="KH_dom-like_a/b"/>
</dbReference>
<dbReference type="InterPro" id="IPR000238">
    <property type="entry name" value="RbfA"/>
</dbReference>
<dbReference type="InterPro" id="IPR023799">
    <property type="entry name" value="RbfA_dom_sf"/>
</dbReference>
<dbReference type="InterPro" id="IPR020053">
    <property type="entry name" value="Ribosome-bd_factorA_CS"/>
</dbReference>
<dbReference type="NCBIfam" id="NF010390">
    <property type="entry name" value="PRK13817.1"/>
    <property type="match status" value="1"/>
</dbReference>
<dbReference type="NCBIfam" id="TIGR00082">
    <property type="entry name" value="rbfA"/>
    <property type="match status" value="1"/>
</dbReference>
<dbReference type="PANTHER" id="PTHR33515">
    <property type="entry name" value="RIBOSOME-BINDING FACTOR A, CHLOROPLASTIC-RELATED"/>
    <property type="match status" value="1"/>
</dbReference>
<dbReference type="PANTHER" id="PTHR33515:SF1">
    <property type="entry name" value="RIBOSOME-BINDING FACTOR A, CHLOROPLASTIC-RELATED"/>
    <property type="match status" value="1"/>
</dbReference>
<dbReference type="Pfam" id="PF02033">
    <property type="entry name" value="RBFA"/>
    <property type="match status" value="1"/>
</dbReference>
<dbReference type="SUPFAM" id="SSF89919">
    <property type="entry name" value="Ribosome-binding factor A, RbfA"/>
    <property type="match status" value="1"/>
</dbReference>
<dbReference type="PROSITE" id="PS01319">
    <property type="entry name" value="RBFA"/>
    <property type="match status" value="1"/>
</dbReference>
<organism>
    <name type="scientific">Coxiella burnetii (strain Dugway 5J108-111)</name>
    <dbReference type="NCBI Taxonomy" id="434922"/>
    <lineage>
        <taxon>Bacteria</taxon>
        <taxon>Pseudomonadati</taxon>
        <taxon>Pseudomonadota</taxon>
        <taxon>Gammaproteobacteria</taxon>
        <taxon>Legionellales</taxon>
        <taxon>Coxiellaceae</taxon>
        <taxon>Coxiella</taxon>
    </lineage>
</organism>
<proteinExistence type="inferred from homology"/>
<protein>
    <recommendedName>
        <fullName evidence="1">Ribosome-binding factor A</fullName>
    </recommendedName>
</protein>
<evidence type="ECO:0000255" key="1">
    <source>
        <dbReference type="HAMAP-Rule" id="MF_00003"/>
    </source>
</evidence>
<sequence length="119" mass="13735">MSQRQQRVADLIHQQLAELLKKEVRDSRLSKISLTAVSISPDLKQAKVFYSLLENQNEKEVQKALNKATGYLRHLLAQATVLRYVPKLEFVYDESIERAHRISLLIERALKKDDSDESS</sequence>